<evidence type="ECO:0000255" key="1">
    <source>
        <dbReference type="HAMAP-Rule" id="MF_00607"/>
    </source>
</evidence>
<keyword id="KW-0963">Cytoplasm</keyword>
<keyword id="KW-0489">Methyltransferase</keyword>
<keyword id="KW-1185">Reference proteome</keyword>
<keyword id="KW-0694">RNA-binding</keyword>
<keyword id="KW-0698">rRNA processing</keyword>
<keyword id="KW-0949">S-adenosyl-L-methionine</keyword>
<keyword id="KW-0808">Transferase</keyword>
<sequence length="284" mass="31944">MTRPAEPARAAGRHRPRKRLGQHFLTDQRIIDAIVQAIAPQPGQPMVEIGPGLAALTQPLVERLGRLTVIELDRDLALRLRRHAHLQVIQADVLRVDFTALAQTLRATPPTPPTRLRVVGNLPYNISTPILFHLLAHGSAIEDQHFMLQKQVVERMVAKPGGSDYGRLSVMLQWRYAMEKLLHVPPASFAPPPRVDSAVVRMLPHAQPAAVSRPMLEELVQLAFSQRRKLLHHTLGRWLDAHQYAGRFDTRRRAEEVPVQEYLDLAREAHRWIADGKDPPCAGA</sequence>
<organism>
    <name type="scientific">Verminephrobacter eiseniae (strain EF01-2)</name>
    <dbReference type="NCBI Taxonomy" id="391735"/>
    <lineage>
        <taxon>Bacteria</taxon>
        <taxon>Pseudomonadati</taxon>
        <taxon>Pseudomonadota</taxon>
        <taxon>Betaproteobacteria</taxon>
        <taxon>Burkholderiales</taxon>
        <taxon>Comamonadaceae</taxon>
        <taxon>Verminephrobacter</taxon>
    </lineage>
</organism>
<proteinExistence type="inferred from homology"/>
<comment type="function">
    <text evidence="1">Specifically dimethylates two adjacent adenosines (A1518 and A1519) in the loop of a conserved hairpin near the 3'-end of 16S rRNA in the 30S particle. May play a critical role in biogenesis of 30S subunits.</text>
</comment>
<comment type="catalytic activity">
    <reaction evidence="1">
        <text>adenosine(1518)/adenosine(1519) in 16S rRNA + 4 S-adenosyl-L-methionine = N(6)-dimethyladenosine(1518)/N(6)-dimethyladenosine(1519) in 16S rRNA + 4 S-adenosyl-L-homocysteine + 4 H(+)</text>
        <dbReference type="Rhea" id="RHEA:19609"/>
        <dbReference type="Rhea" id="RHEA-COMP:10232"/>
        <dbReference type="Rhea" id="RHEA-COMP:10233"/>
        <dbReference type="ChEBI" id="CHEBI:15378"/>
        <dbReference type="ChEBI" id="CHEBI:57856"/>
        <dbReference type="ChEBI" id="CHEBI:59789"/>
        <dbReference type="ChEBI" id="CHEBI:74411"/>
        <dbReference type="ChEBI" id="CHEBI:74493"/>
        <dbReference type="EC" id="2.1.1.182"/>
    </reaction>
</comment>
<comment type="subcellular location">
    <subcellularLocation>
        <location evidence="1">Cytoplasm</location>
    </subcellularLocation>
</comment>
<comment type="similarity">
    <text evidence="1">Belongs to the class I-like SAM-binding methyltransferase superfamily. rRNA adenine N(6)-methyltransferase family. RsmA subfamily.</text>
</comment>
<name>RSMA_VEREI</name>
<dbReference type="EC" id="2.1.1.182" evidence="1"/>
<dbReference type="EMBL" id="CP000542">
    <property type="protein sequence ID" value="ABM60502.1"/>
    <property type="molecule type" value="Genomic_DNA"/>
</dbReference>
<dbReference type="RefSeq" id="WP_011812480.1">
    <property type="nucleotide sequence ID" value="NC_008786.1"/>
</dbReference>
<dbReference type="SMR" id="A1WS95"/>
<dbReference type="STRING" id="391735.Veis_4810"/>
<dbReference type="GeneID" id="76463076"/>
<dbReference type="KEGG" id="vei:Veis_4810"/>
<dbReference type="eggNOG" id="COG0030">
    <property type="taxonomic scope" value="Bacteria"/>
</dbReference>
<dbReference type="HOGENOM" id="CLU_041220_0_1_4"/>
<dbReference type="OrthoDB" id="9814755at2"/>
<dbReference type="Proteomes" id="UP000000374">
    <property type="component" value="Chromosome"/>
</dbReference>
<dbReference type="GO" id="GO:0005829">
    <property type="term" value="C:cytosol"/>
    <property type="evidence" value="ECO:0007669"/>
    <property type="project" value="TreeGrafter"/>
</dbReference>
<dbReference type="GO" id="GO:0052908">
    <property type="term" value="F:16S rRNA (adenine(1518)-N(6)/adenine(1519)-N(6))-dimethyltransferase activity"/>
    <property type="evidence" value="ECO:0007669"/>
    <property type="project" value="UniProtKB-EC"/>
</dbReference>
<dbReference type="GO" id="GO:0003723">
    <property type="term" value="F:RNA binding"/>
    <property type="evidence" value="ECO:0007669"/>
    <property type="project" value="UniProtKB-KW"/>
</dbReference>
<dbReference type="Gene3D" id="1.10.8.100">
    <property type="entry name" value="Ribosomal RNA adenine dimethylase-like, domain 2"/>
    <property type="match status" value="1"/>
</dbReference>
<dbReference type="Gene3D" id="3.40.50.150">
    <property type="entry name" value="Vaccinia Virus protein VP39"/>
    <property type="match status" value="1"/>
</dbReference>
<dbReference type="HAMAP" id="MF_00607">
    <property type="entry name" value="16SrRNA_methyltr_A"/>
    <property type="match status" value="1"/>
</dbReference>
<dbReference type="InterPro" id="IPR001737">
    <property type="entry name" value="KsgA/Erm"/>
</dbReference>
<dbReference type="InterPro" id="IPR023165">
    <property type="entry name" value="rRNA_Ade_diMease-like_C"/>
</dbReference>
<dbReference type="InterPro" id="IPR020596">
    <property type="entry name" value="rRNA_Ade_Mease_Trfase_CS"/>
</dbReference>
<dbReference type="InterPro" id="IPR020598">
    <property type="entry name" value="rRNA_Ade_methylase_Trfase_N"/>
</dbReference>
<dbReference type="InterPro" id="IPR011530">
    <property type="entry name" value="rRNA_adenine_dimethylase"/>
</dbReference>
<dbReference type="InterPro" id="IPR029063">
    <property type="entry name" value="SAM-dependent_MTases_sf"/>
</dbReference>
<dbReference type="NCBIfam" id="TIGR00755">
    <property type="entry name" value="ksgA"/>
    <property type="match status" value="1"/>
</dbReference>
<dbReference type="PANTHER" id="PTHR11727">
    <property type="entry name" value="DIMETHYLADENOSINE TRANSFERASE"/>
    <property type="match status" value="1"/>
</dbReference>
<dbReference type="PANTHER" id="PTHR11727:SF7">
    <property type="entry name" value="DIMETHYLADENOSINE TRANSFERASE-RELATED"/>
    <property type="match status" value="1"/>
</dbReference>
<dbReference type="Pfam" id="PF00398">
    <property type="entry name" value="RrnaAD"/>
    <property type="match status" value="1"/>
</dbReference>
<dbReference type="SMART" id="SM00650">
    <property type="entry name" value="rADc"/>
    <property type="match status" value="1"/>
</dbReference>
<dbReference type="SUPFAM" id="SSF53335">
    <property type="entry name" value="S-adenosyl-L-methionine-dependent methyltransferases"/>
    <property type="match status" value="1"/>
</dbReference>
<dbReference type="PROSITE" id="PS01131">
    <property type="entry name" value="RRNA_A_DIMETH"/>
    <property type="match status" value="1"/>
</dbReference>
<dbReference type="PROSITE" id="PS51689">
    <property type="entry name" value="SAM_RNA_A_N6_MT"/>
    <property type="match status" value="1"/>
</dbReference>
<gene>
    <name evidence="1" type="primary">rsmA</name>
    <name evidence="1" type="synonym">ksgA</name>
    <name type="ordered locus">Veis_4810</name>
</gene>
<feature type="chain" id="PRO_1000056687" description="Ribosomal RNA small subunit methyltransferase A">
    <location>
        <begin position="1"/>
        <end position="284"/>
    </location>
</feature>
<feature type="binding site" evidence="1">
    <location>
        <position position="23"/>
    </location>
    <ligand>
        <name>S-adenosyl-L-methionine</name>
        <dbReference type="ChEBI" id="CHEBI:59789"/>
    </ligand>
</feature>
<feature type="binding site" evidence="1">
    <location>
        <position position="25"/>
    </location>
    <ligand>
        <name>S-adenosyl-L-methionine</name>
        <dbReference type="ChEBI" id="CHEBI:59789"/>
    </ligand>
</feature>
<feature type="binding site" evidence="1">
    <location>
        <position position="50"/>
    </location>
    <ligand>
        <name>S-adenosyl-L-methionine</name>
        <dbReference type="ChEBI" id="CHEBI:59789"/>
    </ligand>
</feature>
<feature type="binding site" evidence="1">
    <location>
        <position position="71"/>
    </location>
    <ligand>
        <name>S-adenosyl-L-methionine</name>
        <dbReference type="ChEBI" id="CHEBI:59789"/>
    </ligand>
</feature>
<feature type="binding site" evidence="1">
    <location>
        <position position="92"/>
    </location>
    <ligand>
        <name>S-adenosyl-L-methionine</name>
        <dbReference type="ChEBI" id="CHEBI:59789"/>
    </ligand>
</feature>
<feature type="binding site" evidence="1">
    <location>
        <position position="121"/>
    </location>
    <ligand>
        <name>S-adenosyl-L-methionine</name>
        <dbReference type="ChEBI" id="CHEBI:59789"/>
    </ligand>
</feature>
<protein>
    <recommendedName>
        <fullName evidence="1">Ribosomal RNA small subunit methyltransferase A</fullName>
        <ecNumber evidence="1">2.1.1.182</ecNumber>
    </recommendedName>
    <alternativeName>
        <fullName evidence="1">16S rRNA (adenine(1518)-N(6)/adenine(1519)-N(6))-dimethyltransferase</fullName>
    </alternativeName>
    <alternativeName>
        <fullName evidence="1">16S rRNA dimethyladenosine transferase</fullName>
    </alternativeName>
    <alternativeName>
        <fullName evidence="1">16S rRNA dimethylase</fullName>
    </alternativeName>
    <alternativeName>
        <fullName evidence="1">S-adenosylmethionine-6-N', N'-adenosyl(rRNA) dimethyltransferase</fullName>
    </alternativeName>
</protein>
<accession>A1WS95</accession>
<reference key="1">
    <citation type="submission" date="2006-12" db="EMBL/GenBank/DDBJ databases">
        <title>Complete sequence of chromosome 1 of Verminephrobacter eiseniae EF01-2.</title>
        <authorList>
            <person name="Copeland A."/>
            <person name="Lucas S."/>
            <person name="Lapidus A."/>
            <person name="Barry K."/>
            <person name="Detter J.C."/>
            <person name="Glavina del Rio T."/>
            <person name="Dalin E."/>
            <person name="Tice H."/>
            <person name="Pitluck S."/>
            <person name="Chertkov O."/>
            <person name="Brettin T."/>
            <person name="Bruce D."/>
            <person name="Han C."/>
            <person name="Tapia R."/>
            <person name="Gilna P."/>
            <person name="Schmutz J."/>
            <person name="Larimer F."/>
            <person name="Land M."/>
            <person name="Hauser L."/>
            <person name="Kyrpides N."/>
            <person name="Kim E."/>
            <person name="Stahl D."/>
            <person name="Richardson P."/>
        </authorList>
    </citation>
    <scope>NUCLEOTIDE SEQUENCE [LARGE SCALE GENOMIC DNA]</scope>
    <source>
        <strain>EF01-2</strain>
    </source>
</reference>